<organism>
    <name type="scientific">Rubrobacter xylanophilus (strain DSM 9941 / JCM 11954 / NBRC 16129 / PRD-1)</name>
    <dbReference type="NCBI Taxonomy" id="266117"/>
    <lineage>
        <taxon>Bacteria</taxon>
        <taxon>Bacillati</taxon>
        <taxon>Actinomycetota</taxon>
        <taxon>Rubrobacteria</taxon>
        <taxon>Rubrobacterales</taxon>
        <taxon>Rubrobacteraceae</taxon>
        <taxon>Rubrobacter</taxon>
    </lineage>
</organism>
<gene>
    <name evidence="1" type="primary">ruvC</name>
    <name type="ordered locus">Rxyl_1322</name>
</gene>
<dbReference type="EC" id="3.1.21.10" evidence="1"/>
<dbReference type="EMBL" id="CP000386">
    <property type="protein sequence ID" value="ABG04286.1"/>
    <property type="molecule type" value="Genomic_DNA"/>
</dbReference>
<dbReference type="RefSeq" id="WP_011564303.1">
    <property type="nucleotide sequence ID" value="NC_008148.1"/>
</dbReference>
<dbReference type="SMR" id="Q1AWE2"/>
<dbReference type="STRING" id="266117.Rxyl_1322"/>
<dbReference type="KEGG" id="rxy:Rxyl_1322"/>
<dbReference type="eggNOG" id="COG0817">
    <property type="taxonomic scope" value="Bacteria"/>
</dbReference>
<dbReference type="HOGENOM" id="CLU_091257_3_1_11"/>
<dbReference type="OrthoDB" id="9805499at2"/>
<dbReference type="PhylomeDB" id="Q1AWE2"/>
<dbReference type="Proteomes" id="UP000006637">
    <property type="component" value="Chromosome"/>
</dbReference>
<dbReference type="GO" id="GO:0005737">
    <property type="term" value="C:cytoplasm"/>
    <property type="evidence" value="ECO:0007669"/>
    <property type="project" value="UniProtKB-SubCell"/>
</dbReference>
<dbReference type="GO" id="GO:0048476">
    <property type="term" value="C:Holliday junction resolvase complex"/>
    <property type="evidence" value="ECO:0007669"/>
    <property type="project" value="UniProtKB-UniRule"/>
</dbReference>
<dbReference type="GO" id="GO:0008821">
    <property type="term" value="F:crossover junction DNA endonuclease activity"/>
    <property type="evidence" value="ECO:0007669"/>
    <property type="project" value="UniProtKB-UniRule"/>
</dbReference>
<dbReference type="GO" id="GO:0003677">
    <property type="term" value="F:DNA binding"/>
    <property type="evidence" value="ECO:0007669"/>
    <property type="project" value="UniProtKB-KW"/>
</dbReference>
<dbReference type="GO" id="GO:0000287">
    <property type="term" value="F:magnesium ion binding"/>
    <property type="evidence" value="ECO:0007669"/>
    <property type="project" value="UniProtKB-UniRule"/>
</dbReference>
<dbReference type="GO" id="GO:0006310">
    <property type="term" value="P:DNA recombination"/>
    <property type="evidence" value="ECO:0007669"/>
    <property type="project" value="UniProtKB-UniRule"/>
</dbReference>
<dbReference type="GO" id="GO:0006281">
    <property type="term" value="P:DNA repair"/>
    <property type="evidence" value="ECO:0007669"/>
    <property type="project" value="UniProtKB-UniRule"/>
</dbReference>
<dbReference type="CDD" id="cd16962">
    <property type="entry name" value="RuvC"/>
    <property type="match status" value="1"/>
</dbReference>
<dbReference type="FunFam" id="3.30.420.10:FF:000002">
    <property type="entry name" value="Crossover junction endodeoxyribonuclease RuvC"/>
    <property type="match status" value="1"/>
</dbReference>
<dbReference type="Gene3D" id="3.30.420.10">
    <property type="entry name" value="Ribonuclease H-like superfamily/Ribonuclease H"/>
    <property type="match status" value="1"/>
</dbReference>
<dbReference type="HAMAP" id="MF_00034">
    <property type="entry name" value="RuvC"/>
    <property type="match status" value="1"/>
</dbReference>
<dbReference type="InterPro" id="IPR012337">
    <property type="entry name" value="RNaseH-like_sf"/>
</dbReference>
<dbReference type="InterPro" id="IPR036397">
    <property type="entry name" value="RNaseH_sf"/>
</dbReference>
<dbReference type="InterPro" id="IPR002176">
    <property type="entry name" value="X-over_junc_endoDNase_RuvC"/>
</dbReference>
<dbReference type="NCBIfam" id="NF000711">
    <property type="entry name" value="PRK00039.2-1"/>
    <property type="match status" value="1"/>
</dbReference>
<dbReference type="NCBIfam" id="TIGR00228">
    <property type="entry name" value="ruvC"/>
    <property type="match status" value="1"/>
</dbReference>
<dbReference type="PANTHER" id="PTHR30194">
    <property type="entry name" value="CROSSOVER JUNCTION ENDODEOXYRIBONUCLEASE RUVC"/>
    <property type="match status" value="1"/>
</dbReference>
<dbReference type="PANTHER" id="PTHR30194:SF3">
    <property type="entry name" value="CROSSOVER JUNCTION ENDODEOXYRIBONUCLEASE RUVC"/>
    <property type="match status" value="1"/>
</dbReference>
<dbReference type="Pfam" id="PF02075">
    <property type="entry name" value="RuvC"/>
    <property type="match status" value="1"/>
</dbReference>
<dbReference type="PRINTS" id="PR00696">
    <property type="entry name" value="RSOLVASERUVC"/>
</dbReference>
<dbReference type="SUPFAM" id="SSF53098">
    <property type="entry name" value="Ribonuclease H-like"/>
    <property type="match status" value="1"/>
</dbReference>
<reference key="1">
    <citation type="submission" date="2006-06" db="EMBL/GenBank/DDBJ databases">
        <title>Complete sequence of Rubrobacter xylanophilus DSM 9941.</title>
        <authorList>
            <consortium name="US DOE Joint Genome Institute"/>
            <person name="Copeland A."/>
            <person name="Lucas S."/>
            <person name="Lapidus A."/>
            <person name="Barry K."/>
            <person name="Detter J.C."/>
            <person name="Glavina del Rio T."/>
            <person name="Hammon N."/>
            <person name="Israni S."/>
            <person name="Dalin E."/>
            <person name="Tice H."/>
            <person name="Pitluck S."/>
            <person name="Munk A.C."/>
            <person name="Brettin T."/>
            <person name="Bruce D."/>
            <person name="Han C."/>
            <person name="Tapia R."/>
            <person name="Gilna P."/>
            <person name="Schmutz J."/>
            <person name="Larimer F."/>
            <person name="Land M."/>
            <person name="Hauser L."/>
            <person name="Kyrpides N."/>
            <person name="Lykidis A."/>
            <person name="da Costa M.S."/>
            <person name="Rainey F.A."/>
            <person name="Empadinhas N."/>
            <person name="Jolivet E."/>
            <person name="Battista J.R."/>
            <person name="Richardson P."/>
        </authorList>
    </citation>
    <scope>NUCLEOTIDE SEQUENCE [LARGE SCALE GENOMIC DNA]</scope>
    <source>
        <strain>DSM 9941 / JCM 11954 / NBRC 16129 / PRD-1</strain>
    </source>
</reference>
<sequence>MLGSQTKQVILGIDPGTATMGWGVVRQEGSRLRYVQHGAITTPSGWGMPRRLDRLFAGVTELIRGYRPSAVAVEELFFNTNVTTAITVGQARGVALLAAYRAGVEVFEYTPLQVKQAITSYGRADKRQVQEMVRALLGLRSIPRPDDAADGLAIAICHAFSHRMSAATGVGKPRAMQDN</sequence>
<comment type="function">
    <text evidence="1">The RuvA-RuvB-RuvC complex processes Holliday junction (HJ) DNA during genetic recombination and DNA repair. Endonuclease that resolves HJ intermediates. Cleaves cruciform DNA by making single-stranded nicks across the HJ at symmetrical positions within the homologous arms, yielding a 5'-phosphate and a 3'-hydroxyl group; requires a central core of homology in the junction. The consensus cleavage sequence is 5'-(A/T)TT(C/G)-3'. Cleavage occurs on the 3'-side of the TT dinucleotide at the point of strand exchange. HJ branch migration catalyzed by RuvA-RuvB allows RuvC to scan DNA until it finds its consensus sequence, where it cleaves and resolves the cruciform DNA.</text>
</comment>
<comment type="catalytic activity">
    <reaction evidence="1">
        <text>Endonucleolytic cleavage at a junction such as a reciprocal single-stranded crossover between two homologous DNA duplexes (Holliday junction).</text>
        <dbReference type="EC" id="3.1.21.10"/>
    </reaction>
</comment>
<comment type="cofactor">
    <cofactor evidence="1">
        <name>Mg(2+)</name>
        <dbReference type="ChEBI" id="CHEBI:18420"/>
    </cofactor>
    <text evidence="1">Binds 2 Mg(2+) ion per subunit.</text>
</comment>
<comment type="subunit">
    <text evidence="1">Homodimer which binds Holliday junction (HJ) DNA. The HJ becomes 2-fold symmetrical on binding to RuvC with unstacked arms; it has a different conformation from HJ DNA in complex with RuvA. In the full resolvosome a probable DNA-RuvA(4)-RuvB(12)-RuvC(2) complex forms which resolves the HJ.</text>
</comment>
<comment type="subcellular location">
    <subcellularLocation>
        <location evidence="1">Cytoplasm</location>
    </subcellularLocation>
</comment>
<comment type="similarity">
    <text evidence="1">Belongs to the RuvC family.</text>
</comment>
<feature type="chain" id="PRO_1000002821" description="Crossover junction endodeoxyribonuclease RuvC">
    <location>
        <begin position="1"/>
        <end position="179"/>
    </location>
</feature>
<feature type="active site" evidence="1">
    <location>
        <position position="14"/>
    </location>
</feature>
<feature type="active site" evidence="1">
    <location>
        <position position="74"/>
    </location>
</feature>
<feature type="active site" evidence="1">
    <location>
        <position position="147"/>
    </location>
</feature>
<feature type="binding site" evidence="1">
    <location>
        <position position="14"/>
    </location>
    <ligand>
        <name>Mg(2+)</name>
        <dbReference type="ChEBI" id="CHEBI:18420"/>
        <label>1</label>
    </ligand>
</feature>
<feature type="binding site" evidence="1">
    <location>
        <position position="74"/>
    </location>
    <ligand>
        <name>Mg(2+)</name>
        <dbReference type="ChEBI" id="CHEBI:18420"/>
        <label>2</label>
    </ligand>
</feature>
<feature type="binding site" evidence="1">
    <location>
        <position position="147"/>
    </location>
    <ligand>
        <name>Mg(2+)</name>
        <dbReference type="ChEBI" id="CHEBI:18420"/>
        <label>1</label>
    </ligand>
</feature>
<evidence type="ECO:0000255" key="1">
    <source>
        <dbReference type="HAMAP-Rule" id="MF_00034"/>
    </source>
</evidence>
<keyword id="KW-0963">Cytoplasm</keyword>
<keyword id="KW-0227">DNA damage</keyword>
<keyword id="KW-0233">DNA recombination</keyword>
<keyword id="KW-0234">DNA repair</keyword>
<keyword id="KW-0238">DNA-binding</keyword>
<keyword id="KW-0255">Endonuclease</keyword>
<keyword id="KW-0378">Hydrolase</keyword>
<keyword id="KW-0460">Magnesium</keyword>
<keyword id="KW-0479">Metal-binding</keyword>
<keyword id="KW-0540">Nuclease</keyword>
<keyword id="KW-1185">Reference proteome</keyword>
<protein>
    <recommendedName>
        <fullName evidence="1">Crossover junction endodeoxyribonuclease RuvC</fullName>
        <ecNumber evidence="1">3.1.21.10</ecNumber>
    </recommendedName>
    <alternativeName>
        <fullName evidence="1">Holliday junction nuclease RuvC</fullName>
    </alternativeName>
    <alternativeName>
        <fullName evidence="1">Holliday junction resolvase RuvC</fullName>
    </alternativeName>
</protein>
<proteinExistence type="inferred from homology"/>
<accession>Q1AWE2</accession>
<name>RUVC_RUBXD</name>